<organism>
    <name type="scientific">Cupriavidus taiwanensis (strain DSM 17343 / BCRC 17206 / CCUG 44338 / CIP 107171 / LMG 19424 / R1)</name>
    <name type="common">Ralstonia taiwanensis (strain LMG 19424)</name>
    <dbReference type="NCBI Taxonomy" id="977880"/>
    <lineage>
        <taxon>Bacteria</taxon>
        <taxon>Pseudomonadati</taxon>
        <taxon>Pseudomonadota</taxon>
        <taxon>Betaproteobacteria</taxon>
        <taxon>Burkholderiales</taxon>
        <taxon>Burkholderiaceae</taxon>
        <taxon>Cupriavidus</taxon>
    </lineage>
</organism>
<sequence>MKMSFRWFGPTDPIPLEYIRQIPGMTHIVSAIYDEPVGEVWPLDKIQALKSTIEAAGLQFKVVESVPVHEDIKLGKPTRERLIANYQQTIRNLAAAGIEVICYNFMPVFDWTRTELAKKLDDGSTCLAFSTREVEQIDVSQGIALPGWDSSYAHAELQSLLAEYRGIDEGRLWEHLEHFLRAIIPVAQECGIKMAIHPDDPPRPIFGLPRIVKNRDDLARILAIVDTPANGLTLCSGSLGAGPQNNVEALVREFGGMGRIHFAHIRNVKITPEGDFEETAHLSSCGSLDIAAIVKAYHDVGFQGYYRPDHGRMIWGETGKPGYGLYDRALGAVYINGMWEAMEKTA</sequence>
<proteinExistence type="inferred from homology"/>
<name>UXUA_CUPTR</name>
<reference key="1">
    <citation type="journal article" date="2008" name="Genome Res.">
        <title>Genome sequence of the beta-rhizobium Cupriavidus taiwanensis and comparative genomics of rhizobia.</title>
        <authorList>
            <person name="Amadou C."/>
            <person name="Pascal G."/>
            <person name="Mangenot S."/>
            <person name="Glew M."/>
            <person name="Bontemps C."/>
            <person name="Capela D."/>
            <person name="Carrere S."/>
            <person name="Cruveiller S."/>
            <person name="Dossat C."/>
            <person name="Lajus A."/>
            <person name="Marchetti M."/>
            <person name="Poinsot V."/>
            <person name="Rouy Z."/>
            <person name="Servin B."/>
            <person name="Saad M."/>
            <person name="Schenowitz C."/>
            <person name="Barbe V."/>
            <person name="Batut J."/>
            <person name="Medigue C."/>
            <person name="Masson-Boivin C."/>
        </authorList>
    </citation>
    <scope>NUCLEOTIDE SEQUENCE [LARGE SCALE GENOMIC DNA]</scope>
    <source>
        <strain>DSM 17343 / BCRC 17206 / CCUG 44338 / CIP 107171 / LMG 19424 / R1</strain>
    </source>
</reference>
<evidence type="ECO:0000255" key="1">
    <source>
        <dbReference type="HAMAP-Rule" id="MF_00106"/>
    </source>
</evidence>
<dbReference type="EC" id="4.2.1.8" evidence="1"/>
<dbReference type="EMBL" id="CU633749">
    <property type="protein sequence ID" value="CAQ69509.1"/>
    <property type="molecule type" value="Genomic_DNA"/>
</dbReference>
<dbReference type="RefSeq" id="WP_012352832.1">
    <property type="nucleotide sequence ID" value="NC_010528.1"/>
</dbReference>
<dbReference type="SMR" id="B3R1A0"/>
<dbReference type="GeneID" id="29760218"/>
<dbReference type="KEGG" id="cti:RALTA_A1563"/>
<dbReference type="eggNOG" id="COG1312">
    <property type="taxonomic scope" value="Bacteria"/>
</dbReference>
<dbReference type="HOGENOM" id="CLU_058621_1_0_4"/>
<dbReference type="BioCyc" id="CTAI977880:RALTA_RS07500-MONOMER"/>
<dbReference type="UniPathway" id="UPA00246"/>
<dbReference type="Proteomes" id="UP000001692">
    <property type="component" value="Chromosome 1"/>
</dbReference>
<dbReference type="GO" id="GO:0008198">
    <property type="term" value="F:ferrous iron binding"/>
    <property type="evidence" value="ECO:0007669"/>
    <property type="project" value="TreeGrafter"/>
</dbReference>
<dbReference type="GO" id="GO:0030145">
    <property type="term" value="F:manganese ion binding"/>
    <property type="evidence" value="ECO:0007669"/>
    <property type="project" value="TreeGrafter"/>
</dbReference>
<dbReference type="GO" id="GO:0008927">
    <property type="term" value="F:mannonate dehydratase activity"/>
    <property type="evidence" value="ECO:0007669"/>
    <property type="project" value="UniProtKB-UniRule"/>
</dbReference>
<dbReference type="GO" id="GO:0042840">
    <property type="term" value="P:D-glucuronate catabolic process"/>
    <property type="evidence" value="ECO:0007669"/>
    <property type="project" value="TreeGrafter"/>
</dbReference>
<dbReference type="Gene3D" id="3.20.20.150">
    <property type="entry name" value="Divalent-metal-dependent TIM barrel enzymes"/>
    <property type="match status" value="1"/>
</dbReference>
<dbReference type="HAMAP" id="MF_00106">
    <property type="entry name" value="UxuA"/>
    <property type="match status" value="1"/>
</dbReference>
<dbReference type="InterPro" id="IPR004628">
    <property type="entry name" value="Man_deHydtase"/>
</dbReference>
<dbReference type="InterPro" id="IPR036237">
    <property type="entry name" value="Xyl_isomerase-like_sf"/>
</dbReference>
<dbReference type="NCBIfam" id="NF003027">
    <property type="entry name" value="PRK03906.1"/>
    <property type="match status" value="2"/>
</dbReference>
<dbReference type="NCBIfam" id="TIGR00695">
    <property type="entry name" value="uxuA"/>
    <property type="match status" value="1"/>
</dbReference>
<dbReference type="PANTHER" id="PTHR30387">
    <property type="entry name" value="MANNONATE DEHYDRATASE"/>
    <property type="match status" value="1"/>
</dbReference>
<dbReference type="PANTHER" id="PTHR30387:SF2">
    <property type="entry name" value="MANNONATE DEHYDRATASE"/>
    <property type="match status" value="1"/>
</dbReference>
<dbReference type="Pfam" id="PF03786">
    <property type="entry name" value="UxuA"/>
    <property type="match status" value="1"/>
</dbReference>
<dbReference type="PIRSF" id="PIRSF016049">
    <property type="entry name" value="Man_dehyd"/>
    <property type="match status" value="1"/>
</dbReference>
<dbReference type="SUPFAM" id="SSF51658">
    <property type="entry name" value="Xylose isomerase-like"/>
    <property type="match status" value="1"/>
</dbReference>
<gene>
    <name evidence="1" type="primary">uxuA</name>
    <name type="ordered locus">RALTA_A1563</name>
</gene>
<feature type="chain" id="PRO_1000094214" description="Mannonate dehydratase">
    <location>
        <begin position="1"/>
        <end position="346"/>
    </location>
</feature>
<protein>
    <recommendedName>
        <fullName evidence="1">Mannonate dehydratase</fullName>
        <ecNumber evidence="1">4.2.1.8</ecNumber>
    </recommendedName>
    <alternativeName>
        <fullName evidence="1">D-mannonate hydro-lyase</fullName>
    </alternativeName>
</protein>
<keyword id="KW-0408">Iron</keyword>
<keyword id="KW-0456">Lyase</keyword>
<keyword id="KW-0464">Manganese</keyword>
<comment type="function">
    <text evidence="1">Catalyzes the dehydration of D-mannonate.</text>
</comment>
<comment type="catalytic activity">
    <reaction evidence="1">
        <text>D-mannonate = 2-dehydro-3-deoxy-D-gluconate + H2O</text>
        <dbReference type="Rhea" id="RHEA:20097"/>
        <dbReference type="ChEBI" id="CHEBI:15377"/>
        <dbReference type="ChEBI" id="CHEBI:17767"/>
        <dbReference type="ChEBI" id="CHEBI:57990"/>
        <dbReference type="EC" id="4.2.1.8"/>
    </reaction>
</comment>
<comment type="cofactor">
    <cofactor evidence="1">
        <name>Fe(2+)</name>
        <dbReference type="ChEBI" id="CHEBI:29033"/>
    </cofactor>
    <cofactor evidence="1">
        <name>Mn(2+)</name>
        <dbReference type="ChEBI" id="CHEBI:29035"/>
    </cofactor>
</comment>
<comment type="pathway">
    <text evidence="1">Carbohydrate metabolism; pentose and glucuronate interconversion.</text>
</comment>
<comment type="similarity">
    <text evidence="1">Belongs to the mannonate dehydratase family.</text>
</comment>
<accession>B3R1A0</accession>